<protein>
    <recommendedName>
        <fullName>Zinc finger protein 609</fullName>
    </recommendedName>
</protein>
<organism>
    <name type="scientific">Mus musculus</name>
    <name type="common">Mouse</name>
    <dbReference type="NCBI Taxonomy" id="10090"/>
    <lineage>
        <taxon>Eukaryota</taxon>
        <taxon>Metazoa</taxon>
        <taxon>Chordata</taxon>
        <taxon>Craniata</taxon>
        <taxon>Vertebrata</taxon>
        <taxon>Euteleostomi</taxon>
        <taxon>Mammalia</taxon>
        <taxon>Eutheria</taxon>
        <taxon>Euarchontoglires</taxon>
        <taxon>Glires</taxon>
        <taxon>Rodentia</taxon>
        <taxon>Myomorpha</taxon>
        <taxon>Muroidea</taxon>
        <taxon>Muridae</taxon>
        <taxon>Murinae</taxon>
        <taxon>Mus</taxon>
        <taxon>Mus</taxon>
    </lineage>
</organism>
<sequence>MSLSSGACGGKGVDANPVETYDSGDEWDIGVGNLIIDLDADLEKDQQKLEMSGSKEVGIPAPNAVATLPDNIKFVTPVPGPQGKEGKSKSKRSKSGKDASKPTPGTSLFSPSEGAASKKEVQGRAGDGASAGGLVAAVAPKGSEKAAKASRSVAGSKKEKENSSSKGKKERSEGVGTCSEKDPGVLQPVPLGGRGSQYDGSAGMDTGTVEPLGSIAIEPGAALNPLGTKPEPEEGENECRPLKKVKSEKMESPVSTPAVLPLHLLVPVVNNDISSPCEQIMVRTRSVGVNTCDVALATEPECLGPCEPGTSVNLEGIVWQETEDGMLVVNVTWRNKTYVGTLLDCTRHDWAPPRFCDSPTSDLEMRNGRGRGKRMRPSSNTPVSEAAAASDSKGTSSSSKTRAGANSKGRRGSQNSSEHRPPASSTSEDVKASPSSANKRKSKPLSDMELNSSSEDSKGSKRVRTNSMGSATGPLPGTKVEPTLVDRNCPSPVLIDCPHPNCNKKYKHINGLKYHQAHAHTDDDSKPEADGDSEYGEEPALHADLSCNGAPVPQKGSLSPARSATPKVRLVEPHSPSPSSKFSTKGLCKKKLSGEGDTDPGALSNDGSDDGPSVMDETSNDAFDSLERKCMEKEKCKKPSSLKSEKIPSKSLKSARPIAPAIPPQQIYTFQTATFTAASPGSSSGLTTTVVQAMPNSPQLKPIQPKPTVMGEPFTVNPALTPAKDKKKKDKKKKDSSKELESPLTPGKVCRAEEGKSPFRDAAGDGIKVESLLNGSSESHQSRLASIKAEADKIYSFTDNAPSPSIGGSSRLDSTTPTQPLTPLHVVTQNGAEASSVKTNSPAYSDISDAGEDGEGKVDSAKSKDPEQLVKEGAKKTLFPPQPQSKDSPYYQGFESYYSPGYAQSSPGTLTSSSQAGMEGQPLKTKKDEEPESVEGKVKNDVCEEKKPELSNSSQQPSVIQQRPNMYMQSLYYNQYAYVPPYGYSDQSYHSHLLSTNTAYRQQYEEQQKRQSLEQQQQQQRGLDKKTEMGLKEREASLKEEWKQKPSIPPTLTKAPSLTDLVKSGPGKAKEPGTDPAKSVIIPKLDDSSKLPSQPPEGLKGKLGEASHLGKEASEAKTGTECGRQAEVDPILWYRQETESRMWTYVYPAKYSDIKSEDDRWKEERDRKLKEDRSRSKDSVPKEDGKESTSSDCKLPPSEESRLGSKEPRPSVHVPVSSPLTQHQSYIPYMHGYSYSQSYDPNHPSYRGMPAVMMQNYPGSYLPSSYSFSPYGSKVSGGEDADKARASPSVSCKASSESKALDILQQHASHYKSKSPTISDKNSQERDRGGCGVVGGGGSCGSVAGAGGTDRSADRPRTSPSQRLMSTHHHHHHLGYSLLPAQYNLPYAAGLSSTAIVASQQGSTPSLYPPPRR</sequence>
<accession>Q8BZ47</accession>
<accession>Q05DD7</accession>
<accession>Q6PD47</accession>
<accession>Q6ZQE3</accession>
<proteinExistence type="evidence at protein level"/>
<gene>
    <name type="primary">Znf609</name>
    <name type="synonym">Kiaa0295</name>
    <name type="synonym">Zfp609</name>
</gene>
<reference key="1">
    <citation type="journal article" date="2009" name="PLoS Biol.">
        <title>Lineage-specific biology revealed by a finished genome assembly of the mouse.</title>
        <authorList>
            <person name="Church D.M."/>
            <person name="Goodstadt L."/>
            <person name="Hillier L.W."/>
            <person name="Zody M.C."/>
            <person name="Goldstein S."/>
            <person name="She X."/>
            <person name="Bult C.J."/>
            <person name="Agarwala R."/>
            <person name="Cherry J.L."/>
            <person name="DiCuccio M."/>
            <person name="Hlavina W."/>
            <person name="Kapustin Y."/>
            <person name="Meric P."/>
            <person name="Maglott D."/>
            <person name="Birtle Z."/>
            <person name="Marques A.C."/>
            <person name="Graves T."/>
            <person name="Zhou S."/>
            <person name="Teague B."/>
            <person name="Potamousis K."/>
            <person name="Churas C."/>
            <person name="Place M."/>
            <person name="Herschleb J."/>
            <person name="Runnheim R."/>
            <person name="Forrest D."/>
            <person name="Amos-Landgraf J."/>
            <person name="Schwartz D.C."/>
            <person name="Cheng Z."/>
            <person name="Lindblad-Toh K."/>
            <person name="Eichler E.E."/>
            <person name="Ponting C.P."/>
        </authorList>
    </citation>
    <scope>NUCLEOTIDE SEQUENCE [LARGE SCALE GENOMIC DNA]</scope>
    <source>
        <strain>C57BL/6J</strain>
    </source>
</reference>
<reference key="2">
    <citation type="journal article" date="2004" name="Genome Res.">
        <title>The status, quality, and expansion of the NIH full-length cDNA project: the Mammalian Gene Collection (MGC).</title>
        <authorList>
            <consortium name="The MGC Project Team"/>
        </authorList>
    </citation>
    <scope>NUCLEOTIDE SEQUENCE [LARGE SCALE MRNA] OF 1-1136</scope>
    <source>
        <tissue>Brain</tissue>
        <tissue>Eye</tissue>
    </source>
</reference>
<reference key="3">
    <citation type="journal article" date="2005" name="Science">
        <title>The transcriptional landscape of the mammalian genome.</title>
        <authorList>
            <person name="Carninci P."/>
            <person name="Kasukawa T."/>
            <person name="Katayama S."/>
            <person name="Gough J."/>
            <person name="Frith M.C."/>
            <person name="Maeda N."/>
            <person name="Oyama R."/>
            <person name="Ravasi T."/>
            <person name="Lenhard B."/>
            <person name="Wells C."/>
            <person name="Kodzius R."/>
            <person name="Shimokawa K."/>
            <person name="Bajic V.B."/>
            <person name="Brenner S.E."/>
            <person name="Batalov S."/>
            <person name="Forrest A.R."/>
            <person name="Zavolan M."/>
            <person name="Davis M.J."/>
            <person name="Wilming L.G."/>
            <person name="Aidinis V."/>
            <person name="Allen J.E."/>
            <person name="Ambesi-Impiombato A."/>
            <person name="Apweiler R."/>
            <person name="Aturaliya R.N."/>
            <person name="Bailey T.L."/>
            <person name="Bansal M."/>
            <person name="Baxter L."/>
            <person name="Beisel K.W."/>
            <person name="Bersano T."/>
            <person name="Bono H."/>
            <person name="Chalk A.M."/>
            <person name="Chiu K.P."/>
            <person name="Choudhary V."/>
            <person name="Christoffels A."/>
            <person name="Clutterbuck D.R."/>
            <person name="Crowe M.L."/>
            <person name="Dalla E."/>
            <person name="Dalrymple B.P."/>
            <person name="de Bono B."/>
            <person name="Della Gatta G."/>
            <person name="di Bernardo D."/>
            <person name="Down T."/>
            <person name="Engstrom P."/>
            <person name="Fagiolini M."/>
            <person name="Faulkner G."/>
            <person name="Fletcher C.F."/>
            <person name="Fukushima T."/>
            <person name="Furuno M."/>
            <person name="Futaki S."/>
            <person name="Gariboldi M."/>
            <person name="Georgii-Hemming P."/>
            <person name="Gingeras T.R."/>
            <person name="Gojobori T."/>
            <person name="Green R.E."/>
            <person name="Gustincich S."/>
            <person name="Harbers M."/>
            <person name="Hayashi Y."/>
            <person name="Hensch T.K."/>
            <person name="Hirokawa N."/>
            <person name="Hill D."/>
            <person name="Huminiecki L."/>
            <person name="Iacono M."/>
            <person name="Ikeo K."/>
            <person name="Iwama A."/>
            <person name="Ishikawa T."/>
            <person name="Jakt M."/>
            <person name="Kanapin A."/>
            <person name="Katoh M."/>
            <person name="Kawasawa Y."/>
            <person name="Kelso J."/>
            <person name="Kitamura H."/>
            <person name="Kitano H."/>
            <person name="Kollias G."/>
            <person name="Krishnan S.P."/>
            <person name="Kruger A."/>
            <person name="Kummerfeld S.K."/>
            <person name="Kurochkin I.V."/>
            <person name="Lareau L.F."/>
            <person name="Lazarevic D."/>
            <person name="Lipovich L."/>
            <person name="Liu J."/>
            <person name="Liuni S."/>
            <person name="McWilliam S."/>
            <person name="Madan Babu M."/>
            <person name="Madera M."/>
            <person name="Marchionni L."/>
            <person name="Matsuda H."/>
            <person name="Matsuzawa S."/>
            <person name="Miki H."/>
            <person name="Mignone F."/>
            <person name="Miyake S."/>
            <person name="Morris K."/>
            <person name="Mottagui-Tabar S."/>
            <person name="Mulder N."/>
            <person name="Nakano N."/>
            <person name="Nakauchi H."/>
            <person name="Ng P."/>
            <person name="Nilsson R."/>
            <person name="Nishiguchi S."/>
            <person name="Nishikawa S."/>
            <person name="Nori F."/>
            <person name="Ohara O."/>
            <person name="Okazaki Y."/>
            <person name="Orlando V."/>
            <person name="Pang K.C."/>
            <person name="Pavan W.J."/>
            <person name="Pavesi G."/>
            <person name="Pesole G."/>
            <person name="Petrovsky N."/>
            <person name="Piazza S."/>
            <person name="Reed J."/>
            <person name="Reid J.F."/>
            <person name="Ring B.Z."/>
            <person name="Ringwald M."/>
            <person name="Rost B."/>
            <person name="Ruan Y."/>
            <person name="Salzberg S.L."/>
            <person name="Sandelin A."/>
            <person name="Schneider C."/>
            <person name="Schoenbach C."/>
            <person name="Sekiguchi K."/>
            <person name="Semple C.A."/>
            <person name="Seno S."/>
            <person name="Sessa L."/>
            <person name="Sheng Y."/>
            <person name="Shibata Y."/>
            <person name="Shimada H."/>
            <person name="Shimada K."/>
            <person name="Silva D."/>
            <person name="Sinclair B."/>
            <person name="Sperling S."/>
            <person name="Stupka E."/>
            <person name="Sugiura K."/>
            <person name="Sultana R."/>
            <person name="Takenaka Y."/>
            <person name="Taki K."/>
            <person name="Tammoja K."/>
            <person name="Tan S.L."/>
            <person name="Tang S."/>
            <person name="Taylor M.S."/>
            <person name="Tegner J."/>
            <person name="Teichmann S.A."/>
            <person name="Ueda H.R."/>
            <person name="van Nimwegen E."/>
            <person name="Verardo R."/>
            <person name="Wei C.L."/>
            <person name="Yagi K."/>
            <person name="Yamanishi H."/>
            <person name="Zabarovsky E."/>
            <person name="Zhu S."/>
            <person name="Zimmer A."/>
            <person name="Hide W."/>
            <person name="Bult C."/>
            <person name="Grimmond S.M."/>
            <person name="Teasdale R.D."/>
            <person name="Liu E.T."/>
            <person name="Brusic V."/>
            <person name="Quackenbush J."/>
            <person name="Wahlestedt C."/>
            <person name="Mattick J.S."/>
            <person name="Hume D.A."/>
            <person name="Kai C."/>
            <person name="Sasaki D."/>
            <person name="Tomaru Y."/>
            <person name="Fukuda S."/>
            <person name="Kanamori-Katayama M."/>
            <person name="Suzuki M."/>
            <person name="Aoki J."/>
            <person name="Arakawa T."/>
            <person name="Iida J."/>
            <person name="Imamura K."/>
            <person name="Itoh M."/>
            <person name="Kato T."/>
            <person name="Kawaji H."/>
            <person name="Kawagashira N."/>
            <person name="Kawashima T."/>
            <person name="Kojima M."/>
            <person name="Kondo S."/>
            <person name="Konno H."/>
            <person name="Nakano K."/>
            <person name="Ninomiya N."/>
            <person name="Nishio T."/>
            <person name="Okada M."/>
            <person name="Plessy C."/>
            <person name="Shibata K."/>
            <person name="Shiraki T."/>
            <person name="Suzuki S."/>
            <person name="Tagami M."/>
            <person name="Waki K."/>
            <person name="Watahiki A."/>
            <person name="Okamura-Oho Y."/>
            <person name="Suzuki H."/>
            <person name="Kawai J."/>
            <person name="Hayashizaki Y."/>
        </authorList>
    </citation>
    <scope>NUCLEOTIDE SEQUENCE [LARGE SCALE MRNA] OF 15-1413</scope>
    <source>
        <strain>C57BL/6J</strain>
        <tissue>Bone</tissue>
    </source>
</reference>
<reference key="4">
    <citation type="journal article" date="2003" name="DNA Res.">
        <title>Prediction of the coding sequences of mouse homologues of KIAA gene: III. The complete nucleotide sequences of 500 mouse KIAA-homologous cDNAs identified by screening of terminal sequences of cDNA clones randomly sampled from size-fractionated libraries.</title>
        <authorList>
            <person name="Okazaki N."/>
            <person name="Kikuno R."/>
            <person name="Ohara R."/>
            <person name="Inamoto S."/>
            <person name="Koseki H."/>
            <person name="Hiraoka S."/>
            <person name="Saga Y."/>
            <person name="Nagase T."/>
            <person name="Ohara O."/>
            <person name="Koga H."/>
        </authorList>
    </citation>
    <scope>NUCLEOTIDE SEQUENCE [LARGE SCALE MRNA] OF 610-1413</scope>
    <source>
        <tissue>Brain</tissue>
    </source>
</reference>
<reference key="5">
    <citation type="journal article" date="2007" name="Proc. Natl. Acad. Sci. U.S.A.">
        <title>Large-scale phosphorylation analysis of mouse liver.</title>
        <authorList>
            <person name="Villen J."/>
            <person name="Beausoleil S.A."/>
            <person name="Gerber S.A."/>
            <person name="Gygi S.P."/>
        </authorList>
    </citation>
    <scope>PHOSPHORYLATION [LARGE SCALE ANALYSIS] AT SER-575 AND SER-577</scope>
    <scope>IDENTIFICATION BY MASS SPECTROMETRY [LARGE SCALE ANALYSIS]</scope>
    <source>
        <tissue>Liver</tissue>
    </source>
</reference>
<reference key="6">
    <citation type="journal article" date="2010" name="Cell">
        <title>A tissue-specific atlas of mouse protein phosphorylation and expression.</title>
        <authorList>
            <person name="Huttlin E.L."/>
            <person name="Jedrychowski M.P."/>
            <person name="Elias J.E."/>
            <person name="Goswami T."/>
            <person name="Rad R."/>
            <person name="Beausoleil S.A."/>
            <person name="Villen J."/>
            <person name="Haas W."/>
            <person name="Sowa M.E."/>
            <person name="Gygi S.P."/>
        </authorList>
    </citation>
    <scope>PHOSPHORYLATION [LARGE SCALE ANALYSIS] AT SER-358; SER-361; SER-467; SER-533; SER-575; SER-577; SER-845; SER-848 AND SER-1057</scope>
    <scope>IDENTIFICATION BY MASS SPECTROMETRY [LARGE SCALE ANALYSIS]</scope>
    <source>
        <tissue>Brain</tissue>
        <tissue>Brown adipose tissue</tissue>
        <tissue>Heart</tissue>
        <tissue>Kidney</tissue>
        <tissue>Liver</tissue>
        <tissue>Lung</tissue>
        <tissue>Pancreas</tissue>
        <tissue>Spleen</tissue>
        <tissue>Testis</tissue>
    </source>
</reference>
<reference key="7">
    <citation type="journal article" date="2013" name="Genes Immun.">
        <title>Reciprocal regulation of Rag expression in thymocytes by the zinc-finger proteins, Zfp608 and Zfp609.</title>
        <authorList>
            <person name="Reed N.P."/>
            <person name="Henderson M.A."/>
            <person name="Oltz E.M."/>
            <person name="Aune T.M."/>
        </authorList>
    </citation>
    <scope>FUNCTION</scope>
    <scope>TISSUE SPECIFICITY</scope>
    <scope>INDUCTION BY ZNF608</scope>
</reference>
<reference key="8">
    <citation type="journal article" date="2015" name="Mol. Cell">
        <title>Circular RNAs in the mammalian brain are highly abundant, conserved, and dynamically expressed.</title>
        <authorList>
            <person name="Rybak-Wolf A."/>
            <person name="Stottmeister C."/>
            <person name="Glazar P."/>
            <person name="Jens M."/>
            <person name="Pino N."/>
            <person name="Giusti S."/>
            <person name="Hanan M."/>
            <person name="Behm M."/>
            <person name="Bartok O."/>
            <person name="Ashwal-Fluss R."/>
            <person name="Herzog M."/>
            <person name="Schreyer L."/>
            <person name="Papavasileiou P."/>
            <person name="Ivanov A."/>
            <person name="Oehman M."/>
            <person name="Refojo D."/>
            <person name="Kadener S."/>
            <person name="Rajewsky N."/>
        </authorList>
    </citation>
    <scope>TISSUE SPECIFICITY</scope>
    <scope>INDUCTION</scope>
</reference>
<reference key="9">
    <citation type="journal article" date="2017" name="Mol. Cell">
        <title>Circ-ZNF609 is a circular RNA that can be translated and functions in myogenesis.</title>
        <authorList>
            <person name="Legnini I."/>
            <person name="Di Timoteo G."/>
            <person name="Rossi F."/>
            <person name="Morlando M."/>
            <person name="Briganti F."/>
            <person name="Sthandier O."/>
            <person name="Fatica A."/>
            <person name="Santini T."/>
            <person name="Andronache A."/>
            <person name="Wade M."/>
            <person name="Laneve P."/>
            <person name="Rajewsky N."/>
            <person name="Bozzoni I."/>
        </authorList>
    </citation>
    <scope>FUNCTION (ISOFORM 2)</scope>
    <scope>TISSUE SPECIFICITY</scope>
    <scope>IDENTIFICATION (ISOFORM 2)</scope>
</reference>
<reference key="10">
    <citation type="journal article" date="2017" name="Neuron">
        <title>Nipbl interacts with Zfp609 and the Integrator complex to regulate cortical neuron migration.</title>
        <authorList>
            <person name="van den Berg D.L."/>
            <person name="Azzarelli R."/>
            <person name="Oishi K."/>
            <person name="Martynoga B."/>
            <person name="Urban N."/>
            <person name="Dekkers D.H."/>
            <person name="Demmers J.A."/>
            <person name="Guillemot F."/>
        </authorList>
    </citation>
    <scope>FUNCTION</scope>
    <scope>INTERACTION WITH THE INTEGRATOR COMPLEX AND NIPBL</scope>
    <scope>SUBCELLULAR LOCATION</scope>
    <scope>TISSUE SPECIFICITY</scope>
    <scope>DEVELOPMENTAL STAGE</scope>
</reference>
<evidence type="ECO:0000250" key="1">
    <source>
        <dbReference type="UniProtKB" id="O15014"/>
    </source>
</evidence>
<evidence type="ECO:0000255" key="2">
    <source>
        <dbReference type="PROSITE-ProRule" id="PRU00042"/>
    </source>
</evidence>
<evidence type="ECO:0000256" key="3">
    <source>
        <dbReference type="SAM" id="MobiDB-lite"/>
    </source>
</evidence>
<evidence type="ECO:0000269" key="4">
    <source>
    </source>
</evidence>
<evidence type="ECO:0000269" key="5">
    <source>
    </source>
</evidence>
<evidence type="ECO:0000269" key="6">
    <source>
    </source>
</evidence>
<evidence type="ECO:0000269" key="7">
    <source>
    </source>
</evidence>
<evidence type="ECO:0000305" key="8"/>
<evidence type="ECO:0007744" key="9">
    <source>
    </source>
</evidence>
<evidence type="ECO:0007744" key="10">
    <source>
    </source>
</evidence>
<name>ZN609_MOUSE</name>
<keyword id="KW-0010">Activator</keyword>
<keyword id="KW-0025">Alternative splicing</keyword>
<keyword id="KW-0217">Developmental protein</keyword>
<keyword id="KW-1017">Isopeptide bond</keyword>
<keyword id="KW-0479">Metal-binding</keyword>
<keyword id="KW-0517">Myogenesis</keyword>
<keyword id="KW-0539">Nucleus</keyword>
<keyword id="KW-0597">Phosphoprotein</keyword>
<keyword id="KW-1185">Reference proteome</keyword>
<keyword id="KW-0804">Transcription</keyword>
<keyword id="KW-0805">Transcription regulation</keyword>
<keyword id="KW-0832">Ubl conjugation</keyword>
<keyword id="KW-0862">Zinc</keyword>
<keyword id="KW-0863">Zinc-finger</keyword>
<feature type="chain" id="PRO_0000280423" description="Zinc finger protein 609">
    <location>
        <begin position="1"/>
        <end position="1413"/>
    </location>
</feature>
<feature type="zinc finger region" description="C2H2-type" evidence="2">
    <location>
        <begin position="495"/>
        <end position="520"/>
    </location>
</feature>
<feature type="region of interest" description="Disordered" evidence="3">
    <location>
        <begin position="1"/>
        <end position="26"/>
    </location>
</feature>
<feature type="region of interest" description="Disordered" evidence="3">
    <location>
        <begin position="47"/>
        <end position="196"/>
    </location>
</feature>
<feature type="region of interest" description="Disordered" evidence="3">
    <location>
        <begin position="354"/>
        <end position="484"/>
    </location>
</feature>
<feature type="region of interest" description="Disordered" evidence="3">
    <location>
        <begin position="517"/>
        <end position="659"/>
    </location>
</feature>
<feature type="region of interest" description="Disordered" evidence="3">
    <location>
        <begin position="695"/>
        <end position="765"/>
    </location>
</feature>
<feature type="region of interest" description="Disordered" evidence="3">
    <location>
        <begin position="797"/>
        <end position="962"/>
    </location>
</feature>
<feature type="region of interest" description="Disordered" evidence="3">
    <location>
        <begin position="1004"/>
        <end position="1127"/>
    </location>
</feature>
<feature type="region of interest" description="Disordered" evidence="3">
    <location>
        <begin position="1154"/>
        <end position="1221"/>
    </location>
</feature>
<feature type="region of interest" description="Disordered" evidence="3">
    <location>
        <begin position="1273"/>
        <end position="1369"/>
    </location>
</feature>
<feature type="compositionally biased region" description="Low complexity" evidence="3">
    <location>
        <begin position="386"/>
        <end position="405"/>
    </location>
</feature>
<feature type="compositionally biased region" description="Polar residues" evidence="3">
    <location>
        <begin position="423"/>
        <end position="437"/>
    </location>
</feature>
<feature type="compositionally biased region" description="Basic and acidic residues" evidence="3">
    <location>
        <begin position="519"/>
        <end position="529"/>
    </location>
</feature>
<feature type="compositionally biased region" description="Basic and acidic residues" evidence="3">
    <location>
        <begin position="625"/>
        <end position="648"/>
    </location>
</feature>
<feature type="compositionally biased region" description="Basic residues" evidence="3">
    <location>
        <begin position="725"/>
        <end position="735"/>
    </location>
</feature>
<feature type="compositionally biased region" description="Basic and acidic residues" evidence="3">
    <location>
        <begin position="750"/>
        <end position="763"/>
    </location>
</feature>
<feature type="compositionally biased region" description="Polar residues" evidence="3">
    <location>
        <begin position="797"/>
        <end position="843"/>
    </location>
</feature>
<feature type="compositionally biased region" description="Basic and acidic residues" evidence="3">
    <location>
        <begin position="854"/>
        <end position="875"/>
    </location>
</feature>
<feature type="compositionally biased region" description="Polar residues" evidence="3">
    <location>
        <begin position="902"/>
        <end position="916"/>
    </location>
</feature>
<feature type="compositionally biased region" description="Basic and acidic residues" evidence="3">
    <location>
        <begin position="925"/>
        <end position="949"/>
    </location>
</feature>
<feature type="compositionally biased region" description="Polar residues" evidence="3">
    <location>
        <begin position="950"/>
        <end position="962"/>
    </location>
</feature>
<feature type="compositionally biased region" description="Basic and acidic residues" evidence="3">
    <location>
        <begin position="1022"/>
        <end position="1044"/>
    </location>
</feature>
<feature type="compositionally biased region" description="Basic and acidic residues" evidence="3">
    <location>
        <begin position="1099"/>
        <end position="1115"/>
    </location>
</feature>
<feature type="compositionally biased region" description="Basic and acidic residues" evidence="3">
    <location>
        <begin position="1154"/>
        <end position="1189"/>
    </location>
</feature>
<feature type="compositionally biased region" description="Basic and acidic residues" evidence="3">
    <location>
        <begin position="1197"/>
        <end position="1210"/>
    </location>
</feature>
<feature type="compositionally biased region" description="Polar residues" evidence="3">
    <location>
        <begin position="1288"/>
        <end position="1298"/>
    </location>
</feature>
<feature type="compositionally biased region" description="Gly residues" evidence="3">
    <location>
        <begin position="1330"/>
        <end position="1348"/>
    </location>
</feature>
<feature type="modified residue" description="Phosphoserine" evidence="10">
    <location>
        <position position="358"/>
    </location>
</feature>
<feature type="modified residue" description="Phosphoserine" evidence="10">
    <location>
        <position position="361"/>
    </location>
</feature>
<feature type="modified residue" description="Phosphoserine" evidence="1">
    <location>
        <position position="379"/>
    </location>
</feature>
<feature type="modified residue" description="Phosphothreonine" evidence="1">
    <location>
        <position position="381"/>
    </location>
</feature>
<feature type="modified residue" description="Phosphoserine" evidence="1">
    <location>
        <position position="413"/>
    </location>
</feature>
<feature type="modified residue" description="Phosphoserine" evidence="1">
    <location>
        <position position="433"/>
    </location>
</feature>
<feature type="modified residue" description="Phosphoserine" evidence="1">
    <location>
        <position position="446"/>
    </location>
</feature>
<feature type="modified residue" description="Phosphoserine" evidence="1">
    <location>
        <position position="452"/>
    </location>
</feature>
<feature type="modified residue" description="Phosphoserine" evidence="10">
    <location>
        <position position="467"/>
    </location>
</feature>
<feature type="modified residue" description="Phosphoserine" evidence="1">
    <location>
        <position position="470"/>
    </location>
</feature>
<feature type="modified residue" description="Phosphoserine" evidence="10">
    <location>
        <position position="533"/>
    </location>
</feature>
<feature type="modified residue" description="Phosphoserine" evidence="9 10">
    <location>
        <position position="575"/>
    </location>
</feature>
<feature type="modified residue" description="Phosphoserine" evidence="9 10">
    <location>
        <position position="577"/>
    </location>
</feature>
<feature type="modified residue" description="Phosphoserine" evidence="1">
    <location>
        <position position="742"/>
    </location>
</feature>
<feature type="modified residue" description="Phosphothreonine" evidence="1">
    <location>
        <position position="745"/>
    </location>
</feature>
<feature type="modified residue" description="Phosphoserine" evidence="1">
    <location>
        <position position="757"/>
    </location>
</feature>
<feature type="modified residue" description="Phosphoserine" evidence="1">
    <location>
        <position position="803"/>
    </location>
</feature>
<feature type="modified residue" description="Phosphothreonine" evidence="1">
    <location>
        <position position="822"/>
    </location>
</feature>
<feature type="modified residue" description="Phosphoserine" evidence="1">
    <location>
        <position position="841"/>
    </location>
</feature>
<feature type="modified residue" description="Phosphoserine" evidence="10">
    <location>
        <position position="845"/>
    </location>
</feature>
<feature type="modified residue" description="Phosphoserine" evidence="10">
    <location>
        <position position="848"/>
    </location>
</feature>
<feature type="modified residue" description="Phosphoserine" evidence="10">
    <location>
        <position position="1057"/>
    </location>
</feature>
<feature type="cross-link" description="Glycyl lysine isopeptide (Lys-Gly) (interchain with G-Cter in SUMO2)" evidence="1">
    <location>
        <position position="479"/>
    </location>
</feature>
<feature type="cross-link" description="Glycyl lysine isopeptide (Lys-Gly) (interchain with G-Cter in SUMO2)" evidence="1">
    <location>
        <position position="788"/>
    </location>
</feature>
<feature type="cross-link" description="Glycyl lysine isopeptide (Lys-Gly) (interchain with G-Cter in SUMO2)" evidence="1">
    <location>
        <position position="1063"/>
    </location>
</feature>
<feature type="cross-link" description="Glycyl lysine isopeptide (Lys-Gly) (interchain with G-Cter in SUMO2)" evidence="1">
    <location>
        <position position="1155"/>
    </location>
</feature>
<feature type="cross-link" description="Glycyl lysine isopeptide (Lys-Gly) (interchain with G-Cter in SUMO2)" evidence="1">
    <location>
        <position position="1299"/>
    </location>
</feature>
<feature type="splice variant" id="VSP_059084" description="In isoform 2.">
    <original>M</original>
    <variation>Q</variation>
    <location>
        <position position="250"/>
    </location>
</feature>
<feature type="splice variant" id="VSP_059085" description="In isoform 2.">
    <location>
        <begin position="251"/>
        <end position="1413"/>
    </location>
</feature>
<feature type="sequence conflict" description="In Ref. 3; BAC29549." evidence="8" ref="3">
    <original>S</original>
    <variation>G</variation>
    <location>
        <position position="697"/>
    </location>
</feature>
<feature type="sequence conflict" description="In Ref. 2; AAH16271." evidence="8" ref="2">
    <original>D</original>
    <variation>K</variation>
    <location>
        <position position="735"/>
    </location>
</feature>
<feature type="sequence conflict" description="In Ref. 4; BAC97921." evidence="8" ref="4">
    <original>S</original>
    <variation>N</variation>
    <location>
        <position position="914"/>
    </location>
</feature>
<dbReference type="EMBL" id="AC151906">
    <property type="status" value="NOT_ANNOTATED_CDS"/>
    <property type="molecule type" value="Genomic_DNA"/>
</dbReference>
<dbReference type="EMBL" id="AC121979">
    <property type="status" value="NOT_ANNOTATED_CDS"/>
    <property type="molecule type" value="Genomic_DNA"/>
</dbReference>
<dbReference type="EMBL" id="BC016271">
    <property type="protein sequence ID" value="AAH16271.1"/>
    <property type="molecule type" value="mRNA"/>
</dbReference>
<dbReference type="EMBL" id="BC058943">
    <property type="protein sequence ID" value="AAH58943.1"/>
    <property type="status" value="ALT_SEQ"/>
    <property type="molecule type" value="mRNA"/>
</dbReference>
<dbReference type="EMBL" id="AK036715">
    <property type="protein sequence ID" value="BAC29549.1"/>
    <property type="status" value="ALT_INIT"/>
    <property type="molecule type" value="mRNA"/>
</dbReference>
<dbReference type="EMBL" id="AK129111">
    <property type="protein sequence ID" value="BAC97921.1"/>
    <property type="molecule type" value="mRNA"/>
</dbReference>
<dbReference type="CCDS" id="CCDS23297.2">
    <molecule id="Q8BZ47-1"/>
</dbReference>
<dbReference type="RefSeq" id="NP_766124.2">
    <molecule id="Q8BZ47-1"/>
    <property type="nucleotide sequence ID" value="NM_172536.3"/>
</dbReference>
<dbReference type="BioGRID" id="229567">
    <property type="interactions" value="8"/>
</dbReference>
<dbReference type="FunCoup" id="Q8BZ47">
    <property type="interactions" value="3997"/>
</dbReference>
<dbReference type="IntAct" id="Q8BZ47">
    <property type="interactions" value="2"/>
</dbReference>
<dbReference type="MINT" id="Q8BZ47"/>
<dbReference type="STRING" id="10090.ENSMUSP00000124089"/>
<dbReference type="GlyGen" id="Q8BZ47">
    <property type="glycosylation" value="3 sites, 1 O-linked glycan (1 site)"/>
</dbReference>
<dbReference type="iPTMnet" id="Q8BZ47"/>
<dbReference type="PhosphoSitePlus" id="Q8BZ47"/>
<dbReference type="jPOST" id="Q8BZ47"/>
<dbReference type="PaxDb" id="10090-ENSMUSP00000124089"/>
<dbReference type="ProteomicsDB" id="275089">
    <molecule id="Q8BZ47-1"/>
</dbReference>
<dbReference type="ProteomicsDB" id="275090">
    <molecule id="Q8BZ47-2"/>
</dbReference>
<dbReference type="Pumba" id="Q8BZ47"/>
<dbReference type="Antibodypedia" id="25830">
    <property type="antibodies" value="37 antibodies from 13 providers"/>
</dbReference>
<dbReference type="Ensembl" id="ENSMUST00000159109.2">
    <molecule id="Q8BZ47-1"/>
    <property type="protein sequence ID" value="ENSMUSP00000124089.2"/>
    <property type="gene ID" value="ENSMUSG00000040524.10"/>
</dbReference>
<dbReference type="GeneID" id="214812"/>
<dbReference type="KEGG" id="mmu:214812"/>
<dbReference type="UCSC" id="uc009qdw.2">
    <molecule id="Q8BZ47-1"/>
    <property type="organism name" value="mouse"/>
</dbReference>
<dbReference type="AGR" id="MGI:2674092"/>
<dbReference type="CTD" id="214812"/>
<dbReference type="MGI" id="MGI:2674092">
    <property type="gene designation" value="Zfp609"/>
</dbReference>
<dbReference type="VEuPathDB" id="HostDB:ENSMUSG00000040524"/>
<dbReference type="eggNOG" id="ENOG502RCUP">
    <property type="taxonomic scope" value="Eukaryota"/>
</dbReference>
<dbReference type="GeneTree" id="ENSGT00390000008748"/>
<dbReference type="HOGENOM" id="CLU_004142_0_0_1"/>
<dbReference type="InParanoid" id="Q8BZ47"/>
<dbReference type="OMA" id="VDRNCPS"/>
<dbReference type="OrthoDB" id="5863628at2759"/>
<dbReference type="PhylomeDB" id="Q8BZ47"/>
<dbReference type="TreeFam" id="TF329775"/>
<dbReference type="BioGRID-ORCS" id="214812">
    <property type="hits" value="5 hits in 78 CRISPR screens"/>
</dbReference>
<dbReference type="ChiTaRS" id="Zfp609">
    <property type="organism name" value="mouse"/>
</dbReference>
<dbReference type="PRO" id="PR:Q8BZ47"/>
<dbReference type="Proteomes" id="UP000000589">
    <property type="component" value="Chromosome 9"/>
</dbReference>
<dbReference type="RNAct" id="Q8BZ47">
    <property type="molecule type" value="protein"/>
</dbReference>
<dbReference type="Bgee" id="ENSMUSG00000040524">
    <property type="expression patterns" value="Expressed in trigeminal ganglion and 71 other cell types or tissues"/>
</dbReference>
<dbReference type="ExpressionAtlas" id="Q8BZ47">
    <property type="expression patterns" value="baseline and differential"/>
</dbReference>
<dbReference type="GO" id="GO:0005654">
    <property type="term" value="C:nucleoplasm"/>
    <property type="evidence" value="ECO:0007669"/>
    <property type="project" value="Ensembl"/>
</dbReference>
<dbReference type="GO" id="GO:0005634">
    <property type="term" value="C:nucleus"/>
    <property type="evidence" value="ECO:0000250"/>
    <property type="project" value="UniProtKB"/>
</dbReference>
<dbReference type="GO" id="GO:0000981">
    <property type="term" value="F:DNA-binding transcription factor activity, RNA polymerase II-specific"/>
    <property type="evidence" value="ECO:0000314"/>
    <property type="project" value="UniProtKB"/>
</dbReference>
<dbReference type="GO" id="GO:1990841">
    <property type="term" value="F:promoter-specific chromatin binding"/>
    <property type="evidence" value="ECO:0000314"/>
    <property type="project" value="ARUK-UCL"/>
</dbReference>
<dbReference type="GO" id="GO:0008270">
    <property type="term" value="F:zinc ion binding"/>
    <property type="evidence" value="ECO:0007669"/>
    <property type="project" value="UniProtKB-KW"/>
</dbReference>
<dbReference type="GO" id="GO:0007517">
    <property type="term" value="P:muscle organ development"/>
    <property type="evidence" value="ECO:0007669"/>
    <property type="project" value="UniProtKB-KW"/>
</dbReference>
<dbReference type="GO" id="GO:2001224">
    <property type="term" value="P:positive regulation of neuron migration"/>
    <property type="evidence" value="ECO:0000315"/>
    <property type="project" value="UniProtKB"/>
</dbReference>
<dbReference type="GO" id="GO:0033089">
    <property type="term" value="P:positive regulation of T cell differentiation in thymus"/>
    <property type="evidence" value="ECO:0000304"/>
    <property type="project" value="UniProtKB"/>
</dbReference>
<dbReference type="GO" id="GO:0045944">
    <property type="term" value="P:positive regulation of transcription by RNA polymerase II"/>
    <property type="evidence" value="ECO:0000314"/>
    <property type="project" value="UniProtKB"/>
</dbReference>
<dbReference type="GO" id="GO:2000291">
    <property type="term" value="P:regulation of myoblast proliferation"/>
    <property type="evidence" value="ECO:0000314"/>
    <property type="project" value="UniProtKB"/>
</dbReference>
<dbReference type="GO" id="GO:0006357">
    <property type="term" value="P:regulation of transcription by RNA polymerase II"/>
    <property type="evidence" value="ECO:0000315"/>
    <property type="project" value="UniProtKB"/>
</dbReference>
<dbReference type="InterPro" id="IPR040010">
    <property type="entry name" value="ZN608/ZN609"/>
</dbReference>
<dbReference type="InterPro" id="IPR013087">
    <property type="entry name" value="Znf_C2H2_type"/>
</dbReference>
<dbReference type="PANTHER" id="PTHR21564">
    <property type="entry name" value="BRAKELESS PROTEIN"/>
    <property type="match status" value="1"/>
</dbReference>
<dbReference type="PANTHER" id="PTHR21564:SF2">
    <property type="entry name" value="ZINC FINGER PROTEIN 609"/>
    <property type="match status" value="1"/>
</dbReference>
<dbReference type="PROSITE" id="PS00028">
    <property type="entry name" value="ZINC_FINGER_C2H2_1"/>
    <property type="match status" value="1"/>
</dbReference>
<dbReference type="PROSITE" id="PS50157">
    <property type="entry name" value="ZINC_FINGER_C2H2_2"/>
    <property type="match status" value="1"/>
</dbReference>
<comment type="function">
    <text evidence="4 6">Transcription factor, which activates RAG1, and possibly RAG2, transcription (PubMed:23076336). Through the regulation of RAG1/2 expression, may regulate thymocyte maturation (PubMed:23076336). Along with NIPBL and the multiprotein complex Integrator, promotes cortical neuron migration during brain development by regulating the transcription of crucial genes in this process (PubMed:28041881). Preferentially binds promoters containing paused RNA polymerase II (PubMed:28041881). Up-regulates the expression of SEMA3A, NRP1, PLXND1 and GABBR2 genes, among others (PubMed:28041881).</text>
</comment>
<comment type="function">
    <molecule>Isoform 2</molecule>
    <text evidence="7">Involved in regulation of myoblast proliferation during myogenesis.</text>
</comment>
<comment type="subunit">
    <text evidence="6">Interacts (via N-terminus) with NIPBL (PubMed:28041881). Interacts with the multiprotein complex Integrator (PubMed:28041881).</text>
</comment>
<comment type="subcellular location">
    <subcellularLocation>
        <location evidence="6">Nucleus</location>
    </subcellularLocation>
</comment>
<comment type="alternative products">
    <event type="alternative splicing"/>
    <isoform>
        <id>Q8BZ47-1</id>
        <name>1</name>
        <sequence type="displayed"/>
    </isoform>
    <isoform>
        <id>Q8BZ47-2</id>
        <name>2</name>
        <sequence type="described" ref="VSP_059084 VSP_059085"/>
    </isoform>
</comment>
<comment type="tissue specificity">
    <text evidence="4 5 6 7">Expressed in myoblasts (PubMed:28344082). Expressed in neurons in various brain regions, including striatum, prefrontal cortex, olfactory bulb, midbrain, cerebellum and hippocampus (PubMed:25921068). Expressed in neural stem cells (at protein level) (PubMed:28041881). Expressed in thymocytes (PubMed:23076336).</text>
</comment>
<comment type="developmental stage">
    <text evidence="6">Expressed in the developing brain at 12.5 dpc. At 14.5 dpc, becomes enriched in the ventricular zone and later, restricted to the progenitor population as cortical neurogenesis peaks. At this stage, not detected in the subventricular zone/intermediate zone (SVZ/IZ). At later stages, detected in the neurons of the cortical plate and in stem cells near the ventricular surface.</text>
</comment>
<comment type="induction">
    <text evidence="4 5">Down-regulated by ZNF608 (PubMed:23076336). Isoform 2 is up-regulated during neuronal differentiation (PubMed:25921068).</text>
</comment>
<comment type="miscellaneous">
    <molecule>Isoform 2</molecule>
    <text evidence="7">Produced by a back-splicing reaction which joins the 5'-splice site of the first coding exon with the 3'-splice site of the upstream intron resulting in a circular RNA, called circ-ZNF609. The translation starts with the same initiator methionine as that of the linear transcript encoding isoform 1. The stop codon is created upon circularization.</text>
</comment>
<comment type="sequence caution" evidence="8">
    <conflict type="erroneous initiation">
        <sequence resource="EMBL-CDS" id="BAC29549"/>
    </conflict>
    <text>Truncated N-terminus.</text>
</comment>